<feature type="chain" id="PRO_0000159571" description="8-oxoguanine DNA glycosylase/AP lyase">
    <location>
        <begin position="1"/>
        <end position="217"/>
    </location>
</feature>
<feature type="active site" evidence="1">
    <location>
        <position position="138"/>
    </location>
</feature>
<feature type="active site" evidence="1">
    <location>
        <position position="157"/>
    </location>
</feature>
<feature type="site" description="Important for guanine/8-oxoguanine distinction" evidence="1">
    <location>
        <position position="217"/>
    </location>
</feature>
<evidence type="ECO:0000255" key="1">
    <source>
        <dbReference type="HAMAP-Rule" id="MF_00241"/>
    </source>
</evidence>
<dbReference type="EC" id="3.2.2.-" evidence="1"/>
<dbReference type="EC" id="4.2.99.18" evidence="1"/>
<dbReference type="EMBL" id="AE009951">
    <property type="protein sequence ID" value="AAL94818.1"/>
    <property type="molecule type" value="Genomic_DNA"/>
</dbReference>
<dbReference type="RefSeq" id="NP_603519.1">
    <property type="nucleotide sequence ID" value="NC_003454.1"/>
</dbReference>
<dbReference type="RefSeq" id="WP_011016533.1">
    <property type="nucleotide sequence ID" value="NZ_OZ209243.1"/>
</dbReference>
<dbReference type="SMR" id="Q8R689"/>
<dbReference type="STRING" id="190304.FN0622"/>
<dbReference type="PaxDb" id="190304-FN0622"/>
<dbReference type="EnsemblBacteria" id="AAL94818">
    <property type="protein sequence ID" value="AAL94818"/>
    <property type="gene ID" value="FN0622"/>
</dbReference>
<dbReference type="KEGG" id="fnu:FN0622"/>
<dbReference type="PATRIC" id="fig|190304.8.peg.1186"/>
<dbReference type="eggNOG" id="COG1059">
    <property type="taxonomic scope" value="Bacteria"/>
</dbReference>
<dbReference type="HOGENOM" id="CLU_104937_0_0_0"/>
<dbReference type="InParanoid" id="Q8R689"/>
<dbReference type="BioCyc" id="FNUC190304:G1FZS-1208-MONOMER"/>
<dbReference type="Proteomes" id="UP000002521">
    <property type="component" value="Chromosome"/>
</dbReference>
<dbReference type="GO" id="GO:0140078">
    <property type="term" value="F:class I DNA-(apurinic or apyrimidinic site) endonuclease activity"/>
    <property type="evidence" value="ECO:0007669"/>
    <property type="project" value="UniProtKB-EC"/>
</dbReference>
<dbReference type="GO" id="GO:0016799">
    <property type="term" value="F:hydrolase activity, hydrolyzing N-glycosyl compounds"/>
    <property type="evidence" value="ECO:0007669"/>
    <property type="project" value="UniProtKB-UniRule"/>
</dbReference>
<dbReference type="GO" id="GO:0006284">
    <property type="term" value="P:base-excision repair"/>
    <property type="evidence" value="ECO:0007669"/>
    <property type="project" value="UniProtKB-UniRule"/>
</dbReference>
<dbReference type="Gene3D" id="1.10.1670.10">
    <property type="entry name" value="Helix-hairpin-Helix base-excision DNA repair enzymes (C-terminal)"/>
    <property type="match status" value="1"/>
</dbReference>
<dbReference type="Gene3D" id="1.10.340.30">
    <property type="entry name" value="Hypothetical protein, domain 2"/>
    <property type="match status" value="1"/>
</dbReference>
<dbReference type="HAMAP" id="MF_00241">
    <property type="entry name" value="Ogg"/>
    <property type="match status" value="1"/>
</dbReference>
<dbReference type="InterPro" id="IPR012092">
    <property type="entry name" value="DNA_glyclase/AP_lyase_Ogg"/>
</dbReference>
<dbReference type="InterPro" id="IPR011257">
    <property type="entry name" value="DNA_glycosylase"/>
</dbReference>
<dbReference type="InterPro" id="IPR003265">
    <property type="entry name" value="HhH-GPD_domain"/>
</dbReference>
<dbReference type="InterPro" id="IPR023170">
    <property type="entry name" value="HhH_base_excis_C"/>
</dbReference>
<dbReference type="NCBIfam" id="NF002305">
    <property type="entry name" value="PRK01229.1"/>
    <property type="match status" value="1"/>
</dbReference>
<dbReference type="Pfam" id="PF22175">
    <property type="entry name" value="Ogg-HhH"/>
    <property type="match status" value="1"/>
</dbReference>
<dbReference type="PIRSF" id="PIRSF005954">
    <property type="entry name" value="Thrmst_ogg"/>
    <property type="match status" value="1"/>
</dbReference>
<dbReference type="SMART" id="SM00478">
    <property type="entry name" value="ENDO3c"/>
    <property type="match status" value="1"/>
</dbReference>
<dbReference type="SUPFAM" id="SSF48150">
    <property type="entry name" value="DNA-glycosylase"/>
    <property type="match status" value="1"/>
</dbReference>
<reference key="1">
    <citation type="journal article" date="2002" name="J. Bacteriol.">
        <title>Genome sequence and analysis of the oral bacterium Fusobacterium nucleatum strain ATCC 25586.</title>
        <authorList>
            <person name="Kapatral V."/>
            <person name="Anderson I."/>
            <person name="Ivanova N."/>
            <person name="Reznik G."/>
            <person name="Los T."/>
            <person name="Lykidis A."/>
            <person name="Bhattacharyya A."/>
            <person name="Bartman A."/>
            <person name="Gardner W."/>
            <person name="Grechkin G."/>
            <person name="Zhu L."/>
            <person name="Vasieva O."/>
            <person name="Chu L."/>
            <person name="Kogan Y."/>
            <person name="Chaga O."/>
            <person name="Goltsman E."/>
            <person name="Bernal A."/>
            <person name="Larsen N."/>
            <person name="D'Souza M."/>
            <person name="Walunas T."/>
            <person name="Pusch G."/>
            <person name="Haselkorn R."/>
            <person name="Fonstein M."/>
            <person name="Kyrpides N.C."/>
            <person name="Overbeek R."/>
        </authorList>
    </citation>
    <scope>NUCLEOTIDE SEQUENCE [LARGE SCALE GENOMIC DNA]</scope>
    <source>
        <strain>ATCC 25586 / DSM 15643 / BCRC 10681 / CIP 101130 / JCM 8532 / KCTC 2640 / LMG 13131 / VPI 4355</strain>
    </source>
</reference>
<comment type="function">
    <text evidence="1">Catalyzes the excision of an oxidatively damaged form of guanine (7,8-dihydro-8-oxoguanine = 8-oxoG) from DNA. Also cleaves the DNA backbone at apurinic/apyrimidinic sites (AP sites).</text>
</comment>
<comment type="catalytic activity">
    <reaction evidence="1">
        <text>2'-deoxyribonucleotide-(2'-deoxyribose 5'-phosphate)-2'-deoxyribonucleotide-DNA = a 3'-end 2'-deoxyribonucleotide-(2,3-dehydro-2,3-deoxyribose 5'-phosphate)-DNA + a 5'-end 5'-phospho-2'-deoxyribonucleoside-DNA + H(+)</text>
        <dbReference type="Rhea" id="RHEA:66592"/>
        <dbReference type="Rhea" id="RHEA-COMP:13180"/>
        <dbReference type="Rhea" id="RHEA-COMP:16897"/>
        <dbReference type="Rhea" id="RHEA-COMP:17067"/>
        <dbReference type="ChEBI" id="CHEBI:15378"/>
        <dbReference type="ChEBI" id="CHEBI:136412"/>
        <dbReference type="ChEBI" id="CHEBI:157695"/>
        <dbReference type="ChEBI" id="CHEBI:167181"/>
        <dbReference type="EC" id="4.2.99.18"/>
    </reaction>
</comment>
<comment type="similarity">
    <text evidence="1">Belongs to the type-2 OGG1 family.</text>
</comment>
<name>OGG1_FUSNN</name>
<protein>
    <recommendedName>
        <fullName evidence="1">8-oxoguanine DNA glycosylase/AP lyase</fullName>
    </recommendedName>
    <domain>
        <recommendedName>
            <fullName evidence="1">8-oxoguanine DNA glycosylase</fullName>
            <shortName evidence="1">8-oxoG DNA glycosylase</shortName>
            <ecNumber evidence="1">3.2.2.-</ecNumber>
        </recommendedName>
    </domain>
    <domain>
        <recommendedName>
            <fullName evidence="1">DNA-(apurinic or apyrimidinic site) lyase</fullName>
            <shortName evidence="1">AP lyase</shortName>
            <ecNumber evidence="1">4.2.99.18</ecNumber>
        </recommendedName>
    </domain>
</protein>
<organism>
    <name type="scientific">Fusobacterium nucleatum subsp. nucleatum (strain ATCC 25586 / DSM 15643 / BCRC 10681 / CIP 101130 / JCM 8532 / KCTC 2640 / LMG 13131 / VPI 4355)</name>
    <dbReference type="NCBI Taxonomy" id="190304"/>
    <lineage>
        <taxon>Bacteria</taxon>
        <taxon>Fusobacteriati</taxon>
        <taxon>Fusobacteriota</taxon>
        <taxon>Fusobacteriia</taxon>
        <taxon>Fusobacteriales</taxon>
        <taxon>Fusobacteriaceae</taxon>
        <taxon>Fusobacterium</taxon>
    </lineage>
</organism>
<proteinExistence type="inferred from homology"/>
<sequence length="217" mass="25924">MKKNEYFNEIEKIYKEMSSHFKERLKEFKNIWENGTNKDIHLELSFCILTPQSKALNAWQAITNLKKDDLIYNGKAEELVEFLNIVRFKNNKSKYLVELREKMMKDGEIITKDFFNTLPTVAEKREWIVKNIKGMSYKEASHFLRNVGFGENIAILDRHILRNLVKLEVIDELPKTLTPKLYLEIEEKMRDYCEFVKIPMDEMDLLLWYKEAGVIFK</sequence>
<gene>
    <name evidence="1" type="primary">ogg</name>
    <name type="ordered locus">FN0622</name>
</gene>
<keyword id="KW-0227">DNA damage</keyword>
<keyword id="KW-0234">DNA repair</keyword>
<keyword id="KW-0326">Glycosidase</keyword>
<keyword id="KW-0378">Hydrolase</keyword>
<keyword id="KW-0456">Lyase</keyword>
<keyword id="KW-0511">Multifunctional enzyme</keyword>
<keyword id="KW-1185">Reference proteome</keyword>
<accession>Q8R689</accession>